<name>AROC_THET8</name>
<keyword id="KW-0028">Amino-acid biosynthesis</keyword>
<keyword id="KW-0057">Aromatic amino acid biosynthesis</keyword>
<keyword id="KW-0274">FAD</keyword>
<keyword id="KW-0285">Flavoprotein</keyword>
<keyword id="KW-0288">FMN</keyword>
<keyword id="KW-0456">Lyase</keyword>
<keyword id="KW-0521">NADP</keyword>
<keyword id="KW-1185">Reference proteome</keyword>
<dbReference type="EC" id="4.2.3.5" evidence="1"/>
<dbReference type="EMBL" id="AP008226">
    <property type="protein sequence ID" value="BAD71207.1"/>
    <property type="molecule type" value="Genomic_DNA"/>
</dbReference>
<dbReference type="RefSeq" id="WP_011228640.1">
    <property type="nucleotide sequence ID" value="NC_006461.1"/>
</dbReference>
<dbReference type="RefSeq" id="YP_144650.1">
    <property type="nucleotide sequence ID" value="NC_006461.1"/>
</dbReference>
<dbReference type="SMR" id="Q5SII5"/>
<dbReference type="EnsemblBacteria" id="BAD71207">
    <property type="protein sequence ID" value="BAD71207"/>
    <property type="gene ID" value="BAD71207"/>
</dbReference>
<dbReference type="GeneID" id="3168132"/>
<dbReference type="KEGG" id="ttj:TTHA1384"/>
<dbReference type="PATRIC" id="fig|300852.9.peg.1360"/>
<dbReference type="eggNOG" id="COG0082">
    <property type="taxonomic scope" value="Bacteria"/>
</dbReference>
<dbReference type="HOGENOM" id="CLU_034547_2_0_0"/>
<dbReference type="PhylomeDB" id="Q5SII5"/>
<dbReference type="UniPathway" id="UPA00053">
    <property type="reaction ID" value="UER00090"/>
</dbReference>
<dbReference type="Proteomes" id="UP000000532">
    <property type="component" value="Chromosome"/>
</dbReference>
<dbReference type="GO" id="GO:0005829">
    <property type="term" value="C:cytosol"/>
    <property type="evidence" value="ECO:0007669"/>
    <property type="project" value="TreeGrafter"/>
</dbReference>
<dbReference type="GO" id="GO:0004107">
    <property type="term" value="F:chorismate synthase activity"/>
    <property type="evidence" value="ECO:0007669"/>
    <property type="project" value="UniProtKB-UniRule"/>
</dbReference>
<dbReference type="GO" id="GO:0010181">
    <property type="term" value="F:FMN binding"/>
    <property type="evidence" value="ECO:0007669"/>
    <property type="project" value="TreeGrafter"/>
</dbReference>
<dbReference type="GO" id="GO:0008652">
    <property type="term" value="P:amino acid biosynthetic process"/>
    <property type="evidence" value="ECO:0007669"/>
    <property type="project" value="UniProtKB-KW"/>
</dbReference>
<dbReference type="GO" id="GO:0009073">
    <property type="term" value="P:aromatic amino acid family biosynthetic process"/>
    <property type="evidence" value="ECO:0007669"/>
    <property type="project" value="UniProtKB-KW"/>
</dbReference>
<dbReference type="GO" id="GO:0009423">
    <property type="term" value="P:chorismate biosynthetic process"/>
    <property type="evidence" value="ECO:0007669"/>
    <property type="project" value="UniProtKB-UniRule"/>
</dbReference>
<dbReference type="CDD" id="cd07304">
    <property type="entry name" value="Chorismate_synthase"/>
    <property type="match status" value="1"/>
</dbReference>
<dbReference type="FunFam" id="3.60.150.10:FF:000002">
    <property type="entry name" value="Chorismate synthase"/>
    <property type="match status" value="1"/>
</dbReference>
<dbReference type="Gene3D" id="3.60.150.10">
    <property type="entry name" value="Chorismate synthase AroC"/>
    <property type="match status" value="1"/>
</dbReference>
<dbReference type="HAMAP" id="MF_00300">
    <property type="entry name" value="Chorismate_synth"/>
    <property type="match status" value="1"/>
</dbReference>
<dbReference type="InterPro" id="IPR000453">
    <property type="entry name" value="Chorismate_synth"/>
</dbReference>
<dbReference type="InterPro" id="IPR035904">
    <property type="entry name" value="Chorismate_synth_AroC_sf"/>
</dbReference>
<dbReference type="InterPro" id="IPR020541">
    <property type="entry name" value="Chorismate_synthase_CS"/>
</dbReference>
<dbReference type="NCBIfam" id="TIGR00033">
    <property type="entry name" value="aroC"/>
    <property type="match status" value="1"/>
</dbReference>
<dbReference type="NCBIfam" id="NF003793">
    <property type="entry name" value="PRK05382.1"/>
    <property type="match status" value="1"/>
</dbReference>
<dbReference type="PANTHER" id="PTHR21085">
    <property type="entry name" value="CHORISMATE SYNTHASE"/>
    <property type="match status" value="1"/>
</dbReference>
<dbReference type="PANTHER" id="PTHR21085:SF0">
    <property type="entry name" value="CHORISMATE SYNTHASE"/>
    <property type="match status" value="1"/>
</dbReference>
<dbReference type="Pfam" id="PF01264">
    <property type="entry name" value="Chorismate_synt"/>
    <property type="match status" value="1"/>
</dbReference>
<dbReference type="PIRSF" id="PIRSF001456">
    <property type="entry name" value="Chorismate_synth"/>
    <property type="match status" value="1"/>
</dbReference>
<dbReference type="SUPFAM" id="SSF103263">
    <property type="entry name" value="Chorismate synthase, AroC"/>
    <property type="match status" value="1"/>
</dbReference>
<dbReference type="PROSITE" id="PS00787">
    <property type="entry name" value="CHORISMATE_SYNTHASE_1"/>
    <property type="match status" value="1"/>
</dbReference>
<dbReference type="PROSITE" id="PS00788">
    <property type="entry name" value="CHORISMATE_SYNTHASE_2"/>
    <property type="match status" value="1"/>
</dbReference>
<reference key="1">
    <citation type="submission" date="2004-11" db="EMBL/GenBank/DDBJ databases">
        <title>Complete genome sequence of Thermus thermophilus HB8.</title>
        <authorList>
            <person name="Masui R."/>
            <person name="Kurokawa K."/>
            <person name="Nakagawa N."/>
            <person name="Tokunaga F."/>
            <person name="Koyama Y."/>
            <person name="Shibata T."/>
            <person name="Oshima T."/>
            <person name="Yokoyama S."/>
            <person name="Yasunaga T."/>
            <person name="Kuramitsu S."/>
        </authorList>
    </citation>
    <scope>NUCLEOTIDE SEQUENCE [LARGE SCALE GENOMIC DNA]</scope>
    <source>
        <strain>ATCC 27634 / DSM 579 / HB8</strain>
    </source>
</reference>
<organism>
    <name type="scientific">Thermus thermophilus (strain ATCC 27634 / DSM 579 / HB8)</name>
    <dbReference type="NCBI Taxonomy" id="300852"/>
    <lineage>
        <taxon>Bacteria</taxon>
        <taxon>Thermotogati</taxon>
        <taxon>Deinococcota</taxon>
        <taxon>Deinococci</taxon>
        <taxon>Thermales</taxon>
        <taxon>Thermaceae</taxon>
        <taxon>Thermus</taxon>
    </lineage>
</organism>
<sequence length="383" mass="41822">MRFLTAGESHGPELLAIIEGLPAGLPLSEEDINPWLEKRQKGYGRGRRMVIERDRVEFRAGVRGGRTTGAPVALAIKNADFKNWAEIMDPAPGNWPRKRALTAARPGHADLAGGMKYGHKDLRDVLERASARETAMRVAVGAVALKLLSLLGVEGVGYVPGMAGVWAKVPFSWDLVPRIEESPLRMTDPEAEAEAIRRIDQAKAEGDTLGGIIEARFRGLVPGLGSHVHWDRKLDGRLAQMALSIPAVKGVEIGPAFENAMKRGSEVHDAIYWSPERGFYRKTNRAGGLEGGMTTGEELVVRAALKPIATLMKPLPTVDVVTHEPKDAARERSDTTAVPAASVILCALSAIVLAQAYLEKFGGDTMEEIQERVERYRERVRAY</sequence>
<feature type="chain" id="PRO_0000140670" description="Chorismate synthase">
    <location>
        <begin position="1"/>
        <end position="383"/>
    </location>
</feature>
<feature type="binding site" evidence="1">
    <location>
        <position position="39"/>
    </location>
    <ligand>
        <name>NADP(+)</name>
        <dbReference type="ChEBI" id="CHEBI:58349"/>
    </ligand>
</feature>
<feature type="binding site" evidence="1">
    <location>
        <position position="45"/>
    </location>
    <ligand>
        <name>NADP(+)</name>
        <dbReference type="ChEBI" id="CHEBI:58349"/>
    </ligand>
</feature>
<feature type="binding site" evidence="1">
    <location>
        <begin position="128"/>
        <end position="130"/>
    </location>
    <ligand>
        <name>FMN</name>
        <dbReference type="ChEBI" id="CHEBI:58210"/>
    </ligand>
</feature>
<feature type="binding site" evidence="1">
    <location>
        <position position="291"/>
    </location>
    <ligand>
        <name>FMN</name>
        <dbReference type="ChEBI" id="CHEBI:58210"/>
    </ligand>
</feature>
<feature type="binding site" evidence="1">
    <location>
        <begin position="306"/>
        <end position="310"/>
    </location>
    <ligand>
        <name>FMN</name>
        <dbReference type="ChEBI" id="CHEBI:58210"/>
    </ligand>
</feature>
<feature type="binding site" evidence="1">
    <location>
        <position position="332"/>
    </location>
    <ligand>
        <name>FMN</name>
        <dbReference type="ChEBI" id="CHEBI:58210"/>
    </ligand>
</feature>
<accession>Q5SII5</accession>
<evidence type="ECO:0000255" key="1">
    <source>
        <dbReference type="HAMAP-Rule" id="MF_00300"/>
    </source>
</evidence>
<comment type="function">
    <text evidence="1">Catalyzes the anti-1,4-elimination of the C-3 phosphate and the C-6 proR hydrogen from 5-enolpyruvylshikimate-3-phosphate (EPSP) to yield chorismate, which is the branch point compound that serves as the starting substrate for the three terminal pathways of aromatic amino acid biosynthesis. This reaction introduces a second double bond into the aromatic ring system.</text>
</comment>
<comment type="catalytic activity">
    <reaction evidence="1">
        <text>5-O-(1-carboxyvinyl)-3-phosphoshikimate = chorismate + phosphate</text>
        <dbReference type="Rhea" id="RHEA:21020"/>
        <dbReference type="ChEBI" id="CHEBI:29748"/>
        <dbReference type="ChEBI" id="CHEBI:43474"/>
        <dbReference type="ChEBI" id="CHEBI:57701"/>
        <dbReference type="EC" id="4.2.3.5"/>
    </reaction>
</comment>
<comment type="cofactor">
    <cofactor evidence="1">
        <name>FMNH2</name>
        <dbReference type="ChEBI" id="CHEBI:57618"/>
    </cofactor>
    <text evidence="1">Reduced FMN (FMNH(2)).</text>
</comment>
<comment type="pathway">
    <text evidence="1">Metabolic intermediate biosynthesis; chorismate biosynthesis; chorismate from D-erythrose 4-phosphate and phosphoenolpyruvate: step 7/7.</text>
</comment>
<comment type="subunit">
    <text evidence="1">Homotetramer.</text>
</comment>
<comment type="similarity">
    <text evidence="1">Belongs to the chorismate synthase family.</text>
</comment>
<protein>
    <recommendedName>
        <fullName evidence="1">Chorismate synthase</fullName>
        <shortName evidence="1">CS</shortName>
        <ecNumber evidence="1">4.2.3.5</ecNumber>
    </recommendedName>
    <alternativeName>
        <fullName evidence="1">5-enolpyruvylshikimate-3-phosphate phospholyase</fullName>
    </alternativeName>
</protein>
<proteinExistence type="inferred from homology"/>
<gene>
    <name evidence="1" type="primary">aroC</name>
    <name type="ordered locus">TTHA1384</name>
</gene>